<reference key="1">
    <citation type="journal article" date="2004" name="Nat. Biotechnol.">
        <title>The genome sequence of the extreme thermophile Thermus thermophilus.</title>
        <authorList>
            <person name="Henne A."/>
            <person name="Brueggemann H."/>
            <person name="Raasch C."/>
            <person name="Wiezer A."/>
            <person name="Hartsch T."/>
            <person name="Liesegang H."/>
            <person name="Johann A."/>
            <person name="Lienard T."/>
            <person name="Gohl O."/>
            <person name="Martinez-Arias R."/>
            <person name="Jacobi C."/>
            <person name="Starkuviene V."/>
            <person name="Schlenczeck S."/>
            <person name="Dencker S."/>
            <person name="Huber R."/>
            <person name="Klenk H.-P."/>
            <person name="Kramer W."/>
            <person name="Merkl R."/>
            <person name="Gottschalk G."/>
            <person name="Fritz H.-J."/>
        </authorList>
    </citation>
    <scope>NUCLEOTIDE SEQUENCE [LARGE SCALE GENOMIC DNA]</scope>
    <source>
        <strain>ATCC BAA-163 / DSM 7039 / HB27</strain>
    </source>
</reference>
<reference key="2">
    <citation type="journal article" date="2005" name="J. Biol. Chem.">
        <title>N1-aminopropylagmatine, a new polyamine produced as a key intermediate in polyamine biosynthesis of an extreme thermophile, Thermus thermophilus.</title>
        <authorList>
            <person name="Ohnuma M."/>
            <person name="Terui Y."/>
            <person name="Tamakoshi M."/>
            <person name="Mitome H."/>
            <person name="Niitsu M."/>
            <person name="Samejima K."/>
            <person name="Kawashima E."/>
            <person name="Oshima T."/>
        </authorList>
    </citation>
    <scope>FUNCTION</scope>
    <scope>CATALYTIC ACTIVITY</scope>
</reference>
<reference key="3">
    <citation type="journal article" date="2010" name="J. Bacteriol.">
        <title>Dual biosynthesis pathway for longer-chain polyamines in the hyperthermophilic archaeon Thermococcus kodakarensis.</title>
        <authorList>
            <person name="Morimoto N."/>
            <person name="Fukuda W."/>
            <person name="Nakajima N."/>
            <person name="Masuda T."/>
            <person name="Terui Y."/>
            <person name="Kanai T."/>
            <person name="Oshima T."/>
            <person name="Imanaka T."/>
            <person name="Fujiwara S."/>
        </authorList>
    </citation>
    <scope>PATHWAY</scope>
</reference>
<gene>
    <name type="ordered locus">TT_C0764</name>
</gene>
<evidence type="ECO:0000250" key="1"/>
<evidence type="ECO:0000255" key="2">
    <source>
        <dbReference type="PROSITE-ProRule" id="PRU00742"/>
    </source>
</evidence>
<evidence type="ECO:0000269" key="3">
    <source>
    </source>
</evidence>
<evidence type="ECO:0000269" key="4">
    <source>
    </source>
</evidence>
<evidence type="ECO:0000305" key="5"/>
<evidence type="ECO:0000305" key="6">
    <source>
    </source>
</evidence>
<dbReference type="EC" id="3.5.3.24"/>
<dbReference type="EMBL" id="AE017221">
    <property type="protein sequence ID" value="AAS81110.1"/>
    <property type="molecule type" value="Genomic_DNA"/>
</dbReference>
<dbReference type="RefSeq" id="WP_011173199.1">
    <property type="nucleotide sequence ID" value="NC_005835.1"/>
</dbReference>
<dbReference type="SMR" id="Q72JK8"/>
<dbReference type="KEGG" id="tth:TT_C0764"/>
<dbReference type="eggNOG" id="COG0010">
    <property type="taxonomic scope" value="Bacteria"/>
</dbReference>
<dbReference type="HOGENOM" id="CLU_039478_0_2_0"/>
<dbReference type="OrthoDB" id="9788689at2"/>
<dbReference type="UniPathway" id="UPA00248"/>
<dbReference type="Proteomes" id="UP000000592">
    <property type="component" value="Chromosome"/>
</dbReference>
<dbReference type="GO" id="GO:0008783">
    <property type="term" value="F:agmatinase activity"/>
    <property type="evidence" value="ECO:0007669"/>
    <property type="project" value="TreeGrafter"/>
</dbReference>
<dbReference type="GO" id="GO:0043920">
    <property type="term" value="F:aminopropylagmatine ureohydrolase activity"/>
    <property type="evidence" value="ECO:0007669"/>
    <property type="project" value="UniProtKB-EC"/>
</dbReference>
<dbReference type="GO" id="GO:0046872">
    <property type="term" value="F:metal ion binding"/>
    <property type="evidence" value="ECO:0007669"/>
    <property type="project" value="UniProtKB-KW"/>
</dbReference>
<dbReference type="GO" id="GO:0033389">
    <property type="term" value="P:putrescine biosynthetic process from arginine, via agmatine"/>
    <property type="evidence" value="ECO:0007669"/>
    <property type="project" value="TreeGrafter"/>
</dbReference>
<dbReference type="GO" id="GO:0008295">
    <property type="term" value="P:spermidine biosynthetic process"/>
    <property type="evidence" value="ECO:0007669"/>
    <property type="project" value="UniProtKB-UniPathway"/>
</dbReference>
<dbReference type="CDD" id="cd11593">
    <property type="entry name" value="Agmatinase-like_2"/>
    <property type="match status" value="1"/>
</dbReference>
<dbReference type="FunFam" id="3.40.800.10:FF:000026">
    <property type="entry name" value="N(1)-aminopropylagmatine ureohydrolase"/>
    <property type="match status" value="1"/>
</dbReference>
<dbReference type="Gene3D" id="3.40.800.10">
    <property type="entry name" value="Ureohydrolase domain"/>
    <property type="match status" value="1"/>
</dbReference>
<dbReference type="InterPro" id="IPR005925">
    <property type="entry name" value="Agmatinase-rel"/>
</dbReference>
<dbReference type="InterPro" id="IPR006035">
    <property type="entry name" value="Ureohydrolase"/>
</dbReference>
<dbReference type="InterPro" id="IPR023696">
    <property type="entry name" value="Ureohydrolase_dom_sf"/>
</dbReference>
<dbReference type="NCBIfam" id="TIGR01230">
    <property type="entry name" value="agmatinase"/>
    <property type="match status" value="1"/>
</dbReference>
<dbReference type="PANTHER" id="PTHR11358">
    <property type="entry name" value="ARGINASE/AGMATINASE"/>
    <property type="match status" value="1"/>
</dbReference>
<dbReference type="PANTHER" id="PTHR11358:SF26">
    <property type="entry name" value="GUANIDINO ACID HYDROLASE, MITOCHONDRIAL"/>
    <property type="match status" value="1"/>
</dbReference>
<dbReference type="Pfam" id="PF00491">
    <property type="entry name" value="Arginase"/>
    <property type="match status" value="1"/>
</dbReference>
<dbReference type="PIRSF" id="PIRSF036979">
    <property type="entry name" value="Arginase"/>
    <property type="match status" value="1"/>
</dbReference>
<dbReference type="SUPFAM" id="SSF52768">
    <property type="entry name" value="Arginase/deacetylase"/>
    <property type="match status" value="1"/>
</dbReference>
<dbReference type="PROSITE" id="PS51409">
    <property type="entry name" value="ARGINASE_2"/>
    <property type="match status" value="1"/>
</dbReference>
<comment type="function">
    <text evidence="3">Involved in the biosynthesis of polyamines which are thought to support the growth of thermophilic microorganisms under high-temperature conditions. It seems that long-chain and branched-chain of polyamines effectively stabilize DNA and RNA, respectively. Catalyzes the decarboxylation of N1-(3-aminopropyl)agmatine to yield spermidine and urea. Does not act on agmatine.</text>
</comment>
<comment type="catalytic activity">
    <reaction evidence="3">
        <text>N(1)-(3-aminopropyl)agmatine + H2O = urea + spermidine</text>
        <dbReference type="Rhea" id="RHEA:35827"/>
        <dbReference type="ChEBI" id="CHEBI:15377"/>
        <dbReference type="ChEBI" id="CHEBI:16199"/>
        <dbReference type="ChEBI" id="CHEBI:57834"/>
        <dbReference type="ChEBI" id="CHEBI:64335"/>
        <dbReference type="EC" id="3.5.3.24"/>
    </reaction>
</comment>
<comment type="cofactor">
    <cofactor evidence="2">
        <name>Mn(2+)</name>
        <dbReference type="ChEBI" id="CHEBI:29035"/>
    </cofactor>
    <text evidence="2">Binds 2 manganese ions per subunit.</text>
</comment>
<comment type="pathway">
    <text evidence="4">Amine and polyamine biosynthesis; spermidine biosynthesis.</text>
</comment>
<comment type="miscellaneous">
    <text evidence="6">The biosynthetic pathway, by which spermidine is synthesized from agmatine via N1-aminopropylagmatine has been characterized in the hyperthermophilic archaeon Pyrococcus kodakarensis and the thermophilic Gram-negative bacterium Thermus thermophilus.</text>
</comment>
<comment type="similarity">
    <text evidence="2">Belongs to the arginase family.</text>
</comment>
<name>APAUH_THET2</name>
<sequence>MRLVFGEKDAPYEEARVVVLPVPYDLSLSFLPGARRGPEAILLASRELEPFLLELGAAPEEVGIHAAEPVPWVAGMAEESHRLIREEALKHLRAGKWLVALGGDHSVTHPLVQAHREALGEFSLLHVDAHADLYPEWQGSVYSHASPFYRLLTEGFPLVQVGIRAMDRDSLRLARKRGVALFPAHRIHREGLPLDEILEALGKRVYISLDFDALDPSLMPSVGTPLPGGLSYRQVVDLLEAVFREKEVVGMDFVELSPNGQFHAEMTAAQLVYHAIGLKGLQAGWLSREVDHI</sequence>
<proteinExistence type="evidence at protein level"/>
<protein>
    <recommendedName>
        <fullName>N(1)-aminopropylagmatine ureohydrolase</fullName>
        <shortName evidence="5">APA ureohydrolase</shortName>
        <shortName evidence="5">APAUH</shortName>
        <ecNumber>3.5.3.24</ecNumber>
    </recommendedName>
    <alternativeName>
        <fullName>Protein SpeB homolog</fullName>
    </alternativeName>
</protein>
<accession>Q72JK8</accession>
<keyword id="KW-0378">Hydrolase</keyword>
<keyword id="KW-0464">Manganese</keyword>
<keyword id="KW-0479">Metal-binding</keyword>
<keyword id="KW-0620">Polyamine biosynthesis</keyword>
<keyword id="KW-0745">Spermidine biosynthesis</keyword>
<feature type="chain" id="PRO_0000424213" description="N(1)-aminopropylagmatine ureohydrolase">
    <location>
        <begin position="1"/>
        <end position="293"/>
    </location>
</feature>
<feature type="binding site" evidence="2">
    <location>
        <position position="105"/>
    </location>
    <ligand>
        <name>Mn(2+)</name>
        <dbReference type="ChEBI" id="CHEBI:29035"/>
        <label>1</label>
    </ligand>
</feature>
<feature type="binding site" evidence="2">
    <location>
        <position position="128"/>
    </location>
    <ligand>
        <name>Mn(2+)</name>
        <dbReference type="ChEBI" id="CHEBI:29035"/>
        <label>1</label>
    </ligand>
</feature>
<feature type="binding site" evidence="2">
    <location>
        <position position="128"/>
    </location>
    <ligand>
        <name>Mn(2+)</name>
        <dbReference type="ChEBI" id="CHEBI:29035"/>
        <label>2</label>
    </ligand>
</feature>
<feature type="binding site" evidence="2">
    <location>
        <position position="130"/>
    </location>
    <ligand>
        <name>Mn(2+)</name>
        <dbReference type="ChEBI" id="CHEBI:29035"/>
        <label>2</label>
    </ligand>
</feature>
<feature type="binding site" evidence="2">
    <location>
        <position position="132"/>
    </location>
    <ligand>
        <name>Mn(2+)</name>
        <dbReference type="ChEBI" id="CHEBI:29035"/>
        <label>1</label>
    </ligand>
</feature>
<feature type="binding site" evidence="2">
    <location>
        <position position="210"/>
    </location>
    <ligand>
        <name>Mn(2+)</name>
        <dbReference type="ChEBI" id="CHEBI:29035"/>
        <label>1</label>
    </ligand>
</feature>
<feature type="binding site" evidence="2">
    <location>
        <position position="210"/>
    </location>
    <ligand>
        <name>Mn(2+)</name>
        <dbReference type="ChEBI" id="CHEBI:29035"/>
        <label>2</label>
    </ligand>
</feature>
<feature type="binding site" evidence="2">
    <location>
        <position position="212"/>
    </location>
    <ligand>
        <name>Mn(2+)</name>
        <dbReference type="ChEBI" id="CHEBI:29035"/>
        <label>2</label>
    </ligand>
</feature>
<feature type="site" description="Important for catalytic activity" evidence="1">
    <location>
        <position position="144"/>
    </location>
</feature>
<organism>
    <name type="scientific">Thermus thermophilus (strain ATCC BAA-163 / DSM 7039 / HB27)</name>
    <dbReference type="NCBI Taxonomy" id="262724"/>
    <lineage>
        <taxon>Bacteria</taxon>
        <taxon>Thermotogati</taxon>
        <taxon>Deinococcota</taxon>
        <taxon>Deinococci</taxon>
        <taxon>Thermales</taxon>
        <taxon>Thermaceae</taxon>
        <taxon>Thermus</taxon>
    </lineage>
</organism>